<sequence>MFQDLHALHTRTSGRRILDLFAADLRRAERFSADLGEMRLDYSKTQIDDAIRAGLIALCDRAQLADKREAMFAGAPINETEGRAVLHTALRNLDGGPVHVDGAEVMADVRLTLARMRRFAEALRSGALPGAGGAITDVVNIGIGGSDLGPAMAVLALAPYHDGPRCHFVSNVDGAHIADTLRGLDPARTLVIVASKTFTTIETMTNARTARDWMQRGGGDPERQFAAVSTATDRTAAFGIPGDRVFGFADWVGGRYSLWGPIGLSLMIAIGPDDFDAFLRGAQEMDRHFQSAPWEKNLPVMLALTGIWHHQICGHPSRAVLPYDQRLARLPAYLQQLEMESNGKSVAMDGTALDQAAGPIVWGEPGTNGQHAFYQLIHQGKQVVPCEFMVAARGHEPDLAHHHRLLIANCLAQSEALMRGRPLDEARAIAAARGVAGDELERQARHRVFAGNRPSTTLIYPRLTPAMLGRIIALYEHRVFVEGVILGINSFDQWGVELGKELATSLGPVVDGTESAAAKDGSTAALVDYVLAHRDTDLT</sequence>
<name>G6PI_RUEPO</name>
<feature type="chain" id="PRO_0000180725" description="Glucose-6-phosphate isomerase">
    <location>
        <begin position="1"/>
        <end position="539"/>
    </location>
</feature>
<feature type="active site" description="Proton donor" evidence="1">
    <location>
        <position position="340"/>
    </location>
</feature>
<feature type="active site" evidence="1">
    <location>
        <position position="371"/>
    </location>
</feature>
<feature type="active site" evidence="1">
    <location>
        <position position="500"/>
    </location>
</feature>
<comment type="function">
    <text evidence="1">Catalyzes the reversible isomerization of glucose-6-phosphate to fructose-6-phosphate.</text>
</comment>
<comment type="catalytic activity">
    <reaction evidence="1">
        <text>alpha-D-glucose 6-phosphate = beta-D-fructose 6-phosphate</text>
        <dbReference type="Rhea" id="RHEA:11816"/>
        <dbReference type="ChEBI" id="CHEBI:57634"/>
        <dbReference type="ChEBI" id="CHEBI:58225"/>
        <dbReference type="EC" id="5.3.1.9"/>
    </reaction>
</comment>
<comment type="pathway">
    <text evidence="1">Carbohydrate biosynthesis; gluconeogenesis.</text>
</comment>
<comment type="pathway">
    <text evidence="1">Carbohydrate degradation; glycolysis; D-glyceraldehyde 3-phosphate and glycerone phosphate from D-glucose: step 2/4.</text>
</comment>
<comment type="subcellular location">
    <subcellularLocation>
        <location evidence="1">Cytoplasm</location>
    </subcellularLocation>
</comment>
<comment type="similarity">
    <text evidence="1">Belongs to the GPI family.</text>
</comment>
<reference key="1">
    <citation type="journal article" date="2004" name="Nature">
        <title>Genome sequence of Silicibacter pomeroyi reveals adaptations to the marine environment.</title>
        <authorList>
            <person name="Moran M.A."/>
            <person name="Buchan A."/>
            <person name="Gonzalez J.M."/>
            <person name="Heidelberg J.F."/>
            <person name="Whitman W.B."/>
            <person name="Kiene R.P."/>
            <person name="Henriksen J.R."/>
            <person name="King G.M."/>
            <person name="Belas R."/>
            <person name="Fuqua C."/>
            <person name="Brinkac L.M."/>
            <person name="Lewis M."/>
            <person name="Johri S."/>
            <person name="Weaver B."/>
            <person name="Pai G."/>
            <person name="Eisen J.A."/>
            <person name="Rahe E."/>
            <person name="Sheldon W.M."/>
            <person name="Ye W."/>
            <person name="Miller T.R."/>
            <person name="Carlton J."/>
            <person name="Rasko D.A."/>
            <person name="Paulsen I.T."/>
            <person name="Ren Q."/>
            <person name="Daugherty S.C."/>
            <person name="DeBoy R.T."/>
            <person name="Dodson R.J."/>
            <person name="Durkin A.S."/>
            <person name="Madupu R."/>
            <person name="Nelson W.C."/>
            <person name="Sullivan S.A."/>
            <person name="Rosovitz M.J."/>
            <person name="Haft D.H."/>
            <person name="Selengut J."/>
            <person name="Ward N."/>
        </authorList>
    </citation>
    <scope>NUCLEOTIDE SEQUENCE [LARGE SCALE GENOMIC DNA]</scope>
    <source>
        <strain>ATCC 700808 / DSM 15171 / DSS-3</strain>
    </source>
</reference>
<reference key="2">
    <citation type="journal article" date="2014" name="Stand. Genomic Sci.">
        <title>An updated genome annotation for the model marine bacterium Ruegeria pomeroyi DSS-3.</title>
        <authorList>
            <person name="Rivers A.R."/>
            <person name="Smith C.B."/>
            <person name="Moran M.A."/>
        </authorList>
    </citation>
    <scope>GENOME REANNOTATION</scope>
    <source>
        <strain>ATCC 700808 / DSM 15171 / DSS-3</strain>
    </source>
</reference>
<accession>Q5LRS9</accession>
<dbReference type="EC" id="5.3.1.9" evidence="1"/>
<dbReference type="EMBL" id="CP000031">
    <property type="protein sequence ID" value="AAV95317.1"/>
    <property type="molecule type" value="Genomic_DNA"/>
</dbReference>
<dbReference type="RefSeq" id="WP_011047772.1">
    <property type="nucleotide sequence ID" value="NC_003911.12"/>
</dbReference>
<dbReference type="SMR" id="Q5LRS9"/>
<dbReference type="STRING" id="246200.SPO2046"/>
<dbReference type="PaxDb" id="246200-SPO2046"/>
<dbReference type="KEGG" id="sil:SPO2046"/>
<dbReference type="eggNOG" id="COG0166">
    <property type="taxonomic scope" value="Bacteria"/>
</dbReference>
<dbReference type="HOGENOM" id="CLU_017947_3_1_5"/>
<dbReference type="OrthoDB" id="140919at2"/>
<dbReference type="UniPathway" id="UPA00109">
    <property type="reaction ID" value="UER00181"/>
</dbReference>
<dbReference type="UniPathway" id="UPA00138"/>
<dbReference type="Proteomes" id="UP000001023">
    <property type="component" value="Chromosome"/>
</dbReference>
<dbReference type="GO" id="GO:0005829">
    <property type="term" value="C:cytosol"/>
    <property type="evidence" value="ECO:0007669"/>
    <property type="project" value="TreeGrafter"/>
</dbReference>
<dbReference type="GO" id="GO:0097367">
    <property type="term" value="F:carbohydrate derivative binding"/>
    <property type="evidence" value="ECO:0007669"/>
    <property type="project" value="InterPro"/>
</dbReference>
<dbReference type="GO" id="GO:0004347">
    <property type="term" value="F:glucose-6-phosphate isomerase activity"/>
    <property type="evidence" value="ECO:0007669"/>
    <property type="project" value="UniProtKB-UniRule"/>
</dbReference>
<dbReference type="GO" id="GO:0048029">
    <property type="term" value="F:monosaccharide binding"/>
    <property type="evidence" value="ECO:0007669"/>
    <property type="project" value="TreeGrafter"/>
</dbReference>
<dbReference type="GO" id="GO:0006094">
    <property type="term" value="P:gluconeogenesis"/>
    <property type="evidence" value="ECO:0007669"/>
    <property type="project" value="UniProtKB-UniRule"/>
</dbReference>
<dbReference type="GO" id="GO:0051156">
    <property type="term" value="P:glucose 6-phosphate metabolic process"/>
    <property type="evidence" value="ECO:0007669"/>
    <property type="project" value="TreeGrafter"/>
</dbReference>
<dbReference type="GO" id="GO:0006096">
    <property type="term" value="P:glycolytic process"/>
    <property type="evidence" value="ECO:0007669"/>
    <property type="project" value="UniProtKB-UniRule"/>
</dbReference>
<dbReference type="CDD" id="cd05015">
    <property type="entry name" value="SIS_PGI_1"/>
    <property type="match status" value="1"/>
</dbReference>
<dbReference type="CDD" id="cd05016">
    <property type="entry name" value="SIS_PGI_2"/>
    <property type="match status" value="1"/>
</dbReference>
<dbReference type="Gene3D" id="1.10.1390.10">
    <property type="match status" value="1"/>
</dbReference>
<dbReference type="Gene3D" id="3.40.50.10490">
    <property type="entry name" value="Glucose-6-phosphate isomerase like protein, domain 1"/>
    <property type="match status" value="2"/>
</dbReference>
<dbReference type="HAMAP" id="MF_00473">
    <property type="entry name" value="G6P_isomerase"/>
    <property type="match status" value="1"/>
</dbReference>
<dbReference type="InterPro" id="IPR001672">
    <property type="entry name" value="G6P_Isomerase"/>
</dbReference>
<dbReference type="InterPro" id="IPR023096">
    <property type="entry name" value="G6P_Isomerase_C"/>
</dbReference>
<dbReference type="InterPro" id="IPR018189">
    <property type="entry name" value="Phosphoglucose_isomerase_CS"/>
</dbReference>
<dbReference type="InterPro" id="IPR046348">
    <property type="entry name" value="SIS_dom_sf"/>
</dbReference>
<dbReference type="InterPro" id="IPR035476">
    <property type="entry name" value="SIS_PGI_1"/>
</dbReference>
<dbReference type="InterPro" id="IPR035482">
    <property type="entry name" value="SIS_PGI_2"/>
</dbReference>
<dbReference type="NCBIfam" id="NF001211">
    <property type="entry name" value="PRK00179.1"/>
    <property type="match status" value="1"/>
</dbReference>
<dbReference type="PANTHER" id="PTHR11469">
    <property type="entry name" value="GLUCOSE-6-PHOSPHATE ISOMERASE"/>
    <property type="match status" value="1"/>
</dbReference>
<dbReference type="PANTHER" id="PTHR11469:SF1">
    <property type="entry name" value="GLUCOSE-6-PHOSPHATE ISOMERASE"/>
    <property type="match status" value="1"/>
</dbReference>
<dbReference type="Pfam" id="PF00342">
    <property type="entry name" value="PGI"/>
    <property type="match status" value="1"/>
</dbReference>
<dbReference type="PRINTS" id="PR00662">
    <property type="entry name" value="G6PISOMERASE"/>
</dbReference>
<dbReference type="SUPFAM" id="SSF53697">
    <property type="entry name" value="SIS domain"/>
    <property type="match status" value="1"/>
</dbReference>
<dbReference type="PROSITE" id="PS00765">
    <property type="entry name" value="P_GLUCOSE_ISOMERASE_1"/>
    <property type="match status" value="1"/>
</dbReference>
<dbReference type="PROSITE" id="PS00174">
    <property type="entry name" value="P_GLUCOSE_ISOMERASE_2"/>
    <property type="match status" value="1"/>
</dbReference>
<dbReference type="PROSITE" id="PS51463">
    <property type="entry name" value="P_GLUCOSE_ISOMERASE_3"/>
    <property type="match status" value="1"/>
</dbReference>
<proteinExistence type="inferred from homology"/>
<organism>
    <name type="scientific">Ruegeria pomeroyi (strain ATCC 700808 / DSM 15171 / DSS-3)</name>
    <name type="common">Silicibacter pomeroyi</name>
    <dbReference type="NCBI Taxonomy" id="246200"/>
    <lineage>
        <taxon>Bacteria</taxon>
        <taxon>Pseudomonadati</taxon>
        <taxon>Pseudomonadota</taxon>
        <taxon>Alphaproteobacteria</taxon>
        <taxon>Rhodobacterales</taxon>
        <taxon>Roseobacteraceae</taxon>
        <taxon>Ruegeria</taxon>
    </lineage>
</organism>
<gene>
    <name evidence="1" type="primary">pgi</name>
    <name type="ordered locus">SPO2046</name>
</gene>
<keyword id="KW-0963">Cytoplasm</keyword>
<keyword id="KW-0312">Gluconeogenesis</keyword>
<keyword id="KW-0324">Glycolysis</keyword>
<keyword id="KW-0413">Isomerase</keyword>
<keyword id="KW-1185">Reference proteome</keyword>
<protein>
    <recommendedName>
        <fullName evidence="1">Glucose-6-phosphate isomerase</fullName>
        <shortName evidence="1">GPI</shortName>
        <ecNumber evidence="1">5.3.1.9</ecNumber>
    </recommendedName>
    <alternativeName>
        <fullName evidence="1">Phosphoglucose isomerase</fullName>
        <shortName evidence="1">PGI</shortName>
    </alternativeName>
    <alternativeName>
        <fullName evidence="1">Phosphohexose isomerase</fullName>
        <shortName evidence="1">PHI</shortName>
    </alternativeName>
</protein>
<evidence type="ECO:0000255" key="1">
    <source>
        <dbReference type="HAMAP-Rule" id="MF_00473"/>
    </source>
</evidence>